<accession>Q1QRL0</accession>
<protein>
    <recommendedName>
        <fullName evidence="1">Protease HtpX homolog</fullName>
        <ecNumber evidence="1">3.4.24.-</ecNumber>
    </recommendedName>
</protein>
<organism>
    <name type="scientific">Nitrobacter hamburgensis (strain DSM 10229 / NCIMB 13809 / X14)</name>
    <dbReference type="NCBI Taxonomy" id="323097"/>
    <lineage>
        <taxon>Bacteria</taxon>
        <taxon>Pseudomonadati</taxon>
        <taxon>Pseudomonadota</taxon>
        <taxon>Alphaproteobacteria</taxon>
        <taxon>Hyphomicrobiales</taxon>
        <taxon>Nitrobacteraceae</taxon>
        <taxon>Nitrobacter</taxon>
    </lineage>
</organism>
<dbReference type="EC" id="3.4.24.-" evidence="1"/>
<dbReference type="EMBL" id="CP000319">
    <property type="protein sequence ID" value="ABE61137.1"/>
    <property type="molecule type" value="Genomic_DNA"/>
</dbReference>
<dbReference type="RefSeq" id="WP_011508843.1">
    <property type="nucleotide sequence ID" value="NC_007964.1"/>
</dbReference>
<dbReference type="SMR" id="Q1QRL0"/>
<dbReference type="STRING" id="323097.Nham_0237"/>
<dbReference type="KEGG" id="nha:Nham_0237"/>
<dbReference type="eggNOG" id="COG0501">
    <property type="taxonomic scope" value="Bacteria"/>
</dbReference>
<dbReference type="HOGENOM" id="CLU_042266_3_0_5"/>
<dbReference type="OrthoDB" id="15218at2"/>
<dbReference type="Proteomes" id="UP000001953">
    <property type="component" value="Chromosome"/>
</dbReference>
<dbReference type="GO" id="GO:0005886">
    <property type="term" value="C:plasma membrane"/>
    <property type="evidence" value="ECO:0007669"/>
    <property type="project" value="UniProtKB-SubCell"/>
</dbReference>
<dbReference type="GO" id="GO:0004222">
    <property type="term" value="F:metalloendopeptidase activity"/>
    <property type="evidence" value="ECO:0007669"/>
    <property type="project" value="UniProtKB-UniRule"/>
</dbReference>
<dbReference type="GO" id="GO:0008270">
    <property type="term" value="F:zinc ion binding"/>
    <property type="evidence" value="ECO:0007669"/>
    <property type="project" value="UniProtKB-UniRule"/>
</dbReference>
<dbReference type="GO" id="GO:0006508">
    <property type="term" value="P:proteolysis"/>
    <property type="evidence" value="ECO:0007669"/>
    <property type="project" value="UniProtKB-KW"/>
</dbReference>
<dbReference type="CDD" id="cd07336">
    <property type="entry name" value="M48B_HtpX_like"/>
    <property type="match status" value="1"/>
</dbReference>
<dbReference type="Gene3D" id="3.30.2010.10">
    <property type="entry name" value="Metalloproteases ('zincins'), catalytic domain"/>
    <property type="match status" value="1"/>
</dbReference>
<dbReference type="HAMAP" id="MF_00188">
    <property type="entry name" value="Pept_M48_protease_HtpX"/>
    <property type="match status" value="1"/>
</dbReference>
<dbReference type="InterPro" id="IPR050083">
    <property type="entry name" value="HtpX_protease"/>
</dbReference>
<dbReference type="InterPro" id="IPR022919">
    <property type="entry name" value="Pept_M48_protease_HtpX"/>
</dbReference>
<dbReference type="InterPro" id="IPR001915">
    <property type="entry name" value="Peptidase_M48"/>
</dbReference>
<dbReference type="NCBIfam" id="NF002363">
    <property type="entry name" value="PRK01345.1"/>
    <property type="match status" value="1"/>
</dbReference>
<dbReference type="NCBIfam" id="NF002826">
    <property type="entry name" value="PRK03001.1"/>
    <property type="match status" value="1"/>
</dbReference>
<dbReference type="PANTHER" id="PTHR43221">
    <property type="entry name" value="PROTEASE HTPX"/>
    <property type="match status" value="1"/>
</dbReference>
<dbReference type="PANTHER" id="PTHR43221:SF1">
    <property type="entry name" value="PROTEASE HTPX"/>
    <property type="match status" value="1"/>
</dbReference>
<dbReference type="Pfam" id="PF01435">
    <property type="entry name" value="Peptidase_M48"/>
    <property type="match status" value="1"/>
</dbReference>
<feature type="chain" id="PRO_1000020900" description="Protease HtpX homolog">
    <location>
        <begin position="1"/>
        <end position="307"/>
    </location>
</feature>
<feature type="transmembrane region" description="Helical" evidence="1">
    <location>
        <begin position="16"/>
        <end position="36"/>
    </location>
</feature>
<feature type="transmembrane region" description="Helical" evidence="1">
    <location>
        <begin position="145"/>
        <end position="165"/>
    </location>
</feature>
<feature type="transmembrane region" description="Helical" evidence="1">
    <location>
        <begin position="172"/>
        <end position="192"/>
    </location>
</feature>
<feature type="region of interest" description="Disordered" evidence="2">
    <location>
        <begin position="278"/>
        <end position="307"/>
    </location>
</feature>
<feature type="active site" evidence="1">
    <location>
        <position position="131"/>
    </location>
</feature>
<feature type="binding site" evidence="1">
    <location>
        <position position="130"/>
    </location>
    <ligand>
        <name>Zn(2+)</name>
        <dbReference type="ChEBI" id="CHEBI:29105"/>
        <note>catalytic</note>
    </ligand>
</feature>
<feature type="binding site" evidence="1">
    <location>
        <position position="134"/>
    </location>
    <ligand>
        <name>Zn(2+)</name>
        <dbReference type="ChEBI" id="CHEBI:29105"/>
        <note>catalytic</note>
    </ligand>
</feature>
<feature type="binding site" evidence="1">
    <location>
        <position position="201"/>
    </location>
    <ligand>
        <name>Zn(2+)</name>
        <dbReference type="ChEBI" id="CHEBI:29105"/>
        <note>catalytic</note>
    </ligand>
</feature>
<keyword id="KW-0997">Cell inner membrane</keyword>
<keyword id="KW-1003">Cell membrane</keyword>
<keyword id="KW-0378">Hydrolase</keyword>
<keyword id="KW-0472">Membrane</keyword>
<keyword id="KW-0479">Metal-binding</keyword>
<keyword id="KW-0482">Metalloprotease</keyword>
<keyword id="KW-0645">Protease</keyword>
<keyword id="KW-1185">Reference proteome</keyword>
<keyword id="KW-0812">Transmembrane</keyword>
<keyword id="KW-1133">Transmembrane helix</keyword>
<keyword id="KW-0862">Zinc</keyword>
<gene>
    <name evidence="1" type="primary">htpX</name>
    <name type="ordered locus">Nham_0237</name>
</gene>
<name>HTPX_NITHX</name>
<proteinExistence type="inferred from homology"/>
<sequence>MSYFRTAILLAGLTGLFMGVGYLIGGAAGAMIALVVAAATNMFAYWNSDRMVLSMYGAHEVDAGTAPDLHRLVAELAARAALPMPRVFLMDNPQPNAFATGRNPENAAVAVTTGLMQSLRREELAGVIAHELAHIKHHDTLLMTITATIAGAISMLAQFGMFFGGGNRGNNGPGIIGSLAMMILAPLGAMLVQMAISRTREYAADEMGARICGQPMWLASALAKIDDAAHQVPNREAERAPATAHMFIINPLSGHGMDNLFATHPSTENRIAALQRLAGQSGSATPDPAPAPRGPWNGGAPRRGPWG</sequence>
<evidence type="ECO:0000255" key="1">
    <source>
        <dbReference type="HAMAP-Rule" id="MF_00188"/>
    </source>
</evidence>
<evidence type="ECO:0000256" key="2">
    <source>
        <dbReference type="SAM" id="MobiDB-lite"/>
    </source>
</evidence>
<reference key="1">
    <citation type="submission" date="2006-03" db="EMBL/GenBank/DDBJ databases">
        <title>Complete sequence of chromosome of Nitrobacter hamburgensis X14.</title>
        <authorList>
            <consortium name="US DOE Joint Genome Institute"/>
            <person name="Copeland A."/>
            <person name="Lucas S."/>
            <person name="Lapidus A."/>
            <person name="Barry K."/>
            <person name="Detter J.C."/>
            <person name="Glavina del Rio T."/>
            <person name="Hammon N."/>
            <person name="Israni S."/>
            <person name="Dalin E."/>
            <person name="Tice H."/>
            <person name="Pitluck S."/>
            <person name="Chain P."/>
            <person name="Malfatti S."/>
            <person name="Shin M."/>
            <person name="Vergez L."/>
            <person name="Schmutz J."/>
            <person name="Larimer F."/>
            <person name="Land M."/>
            <person name="Hauser L."/>
            <person name="Kyrpides N."/>
            <person name="Ivanova N."/>
            <person name="Ward B."/>
            <person name="Arp D."/>
            <person name="Klotz M."/>
            <person name="Stein L."/>
            <person name="O'Mullan G."/>
            <person name="Starkenburg S."/>
            <person name="Sayavedra L."/>
            <person name="Poret-Peterson A.T."/>
            <person name="Gentry M.E."/>
            <person name="Bruce D."/>
            <person name="Richardson P."/>
        </authorList>
    </citation>
    <scope>NUCLEOTIDE SEQUENCE [LARGE SCALE GENOMIC DNA]</scope>
    <source>
        <strain>DSM 10229 / NCIMB 13809 / X14</strain>
    </source>
</reference>
<comment type="cofactor">
    <cofactor evidence="1">
        <name>Zn(2+)</name>
        <dbReference type="ChEBI" id="CHEBI:29105"/>
    </cofactor>
    <text evidence="1">Binds 1 zinc ion per subunit.</text>
</comment>
<comment type="subcellular location">
    <subcellularLocation>
        <location evidence="1">Cell inner membrane</location>
        <topology evidence="1">Multi-pass membrane protein</topology>
    </subcellularLocation>
</comment>
<comment type="similarity">
    <text evidence="1">Belongs to the peptidase M48B family.</text>
</comment>